<name>DDI1_COCIM</name>
<keyword id="KW-0064">Aspartyl protease</keyword>
<keyword id="KW-0963">Cytoplasm</keyword>
<keyword id="KW-0378">Hydrolase</keyword>
<keyword id="KW-0645">Protease</keyword>
<keyword id="KW-0653">Protein transport</keyword>
<keyword id="KW-1185">Reference proteome</keyword>
<keyword id="KW-0813">Transport</keyword>
<accession>Q1DNB9</accession>
<accession>J3K5R6</accession>
<feature type="chain" id="PRO_0000285311" description="DNA damage-inducible protein 1">
    <location>
        <begin position="1"/>
        <end position="446"/>
    </location>
</feature>
<feature type="domain" description="Ubiquitin-like" evidence="5">
    <location>
        <begin position="1"/>
        <end position="83"/>
    </location>
</feature>
<feature type="domain" description="UBA" evidence="4">
    <location>
        <begin position="408"/>
        <end position="446"/>
    </location>
</feature>
<feature type="region of interest" description="Disordered" evidence="6">
    <location>
        <begin position="387"/>
        <end position="412"/>
    </location>
</feature>
<feature type="active site" evidence="7">
    <location>
        <position position="231"/>
    </location>
</feature>
<evidence type="ECO:0000250" key="1"/>
<evidence type="ECO:0000250" key="2">
    <source>
        <dbReference type="UniProtKB" id="I7HUG0"/>
    </source>
</evidence>
<evidence type="ECO:0000250" key="3">
    <source>
        <dbReference type="UniProtKB" id="P40087"/>
    </source>
</evidence>
<evidence type="ECO:0000255" key="4">
    <source>
        <dbReference type="PROSITE-ProRule" id="PRU00212"/>
    </source>
</evidence>
<evidence type="ECO:0000255" key="5">
    <source>
        <dbReference type="PROSITE-ProRule" id="PRU00214"/>
    </source>
</evidence>
<evidence type="ECO:0000256" key="6">
    <source>
        <dbReference type="SAM" id="MobiDB-lite"/>
    </source>
</evidence>
<evidence type="ECO:0000305" key="7"/>
<reference key="1">
    <citation type="journal article" date="2009" name="Genome Res.">
        <title>Comparative genomic analyses of the human fungal pathogens Coccidioides and their relatives.</title>
        <authorList>
            <person name="Sharpton T.J."/>
            <person name="Stajich J.E."/>
            <person name="Rounsley S.D."/>
            <person name="Gardner M.J."/>
            <person name="Wortman J.R."/>
            <person name="Jordar V.S."/>
            <person name="Maiti R."/>
            <person name="Kodira C.D."/>
            <person name="Neafsey D.E."/>
            <person name="Zeng Q."/>
            <person name="Hung C.-Y."/>
            <person name="McMahan C."/>
            <person name="Muszewska A."/>
            <person name="Grynberg M."/>
            <person name="Mandel M.A."/>
            <person name="Kellner E.M."/>
            <person name="Barker B.M."/>
            <person name="Galgiani J.N."/>
            <person name="Orbach M.J."/>
            <person name="Kirkland T.N."/>
            <person name="Cole G.T."/>
            <person name="Henn M.R."/>
            <person name="Birren B.W."/>
            <person name="Taylor J.W."/>
        </authorList>
    </citation>
    <scope>NUCLEOTIDE SEQUENCE [LARGE SCALE GENOMIC DNA]</scope>
    <source>
        <strain>RS</strain>
    </source>
</reference>
<reference key="2">
    <citation type="journal article" date="2010" name="Genome Res.">
        <title>Population genomic sequencing of Coccidioides fungi reveals recent hybridization and transposon control.</title>
        <authorList>
            <person name="Neafsey D.E."/>
            <person name="Barker B.M."/>
            <person name="Sharpton T.J."/>
            <person name="Stajich J.E."/>
            <person name="Park D.J."/>
            <person name="Whiston E."/>
            <person name="Hung C.-Y."/>
            <person name="McMahan C."/>
            <person name="White J."/>
            <person name="Sykes S."/>
            <person name="Heiman D."/>
            <person name="Young S."/>
            <person name="Zeng Q."/>
            <person name="Abouelleil A."/>
            <person name="Aftuck L."/>
            <person name="Bessette D."/>
            <person name="Brown A."/>
            <person name="FitzGerald M."/>
            <person name="Lui A."/>
            <person name="Macdonald J.P."/>
            <person name="Priest M."/>
            <person name="Orbach M.J."/>
            <person name="Galgiani J.N."/>
            <person name="Kirkland T.N."/>
            <person name="Cole G.T."/>
            <person name="Birren B.W."/>
            <person name="Henn M.R."/>
            <person name="Taylor J.W."/>
            <person name="Rounsley S.D."/>
        </authorList>
    </citation>
    <scope>GENOME REANNOTATION</scope>
    <source>
        <strain>RS</strain>
    </source>
</reference>
<proteinExistence type="inferred from homology"/>
<dbReference type="EC" id="3.4.23.-" evidence="2"/>
<dbReference type="EMBL" id="GG704913">
    <property type="protein sequence ID" value="EAS29448.3"/>
    <property type="molecule type" value="Genomic_DNA"/>
</dbReference>
<dbReference type="RefSeq" id="XP_001241031.2">
    <property type="nucleotide sequence ID" value="XM_001241030.2"/>
</dbReference>
<dbReference type="SMR" id="Q1DNB9"/>
<dbReference type="FunCoup" id="Q1DNB9">
    <property type="interactions" value="273"/>
</dbReference>
<dbReference type="STRING" id="246410.Q1DNB9"/>
<dbReference type="MEROPS" id="A28.A06"/>
<dbReference type="GeneID" id="24163999"/>
<dbReference type="KEGG" id="cim:CIMG_12111"/>
<dbReference type="VEuPathDB" id="FungiDB:CIMG_12111"/>
<dbReference type="InParanoid" id="Q1DNB9"/>
<dbReference type="OMA" id="GHRLNAF"/>
<dbReference type="OrthoDB" id="1047367at2759"/>
<dbReference type="Proteomes" id="UP000001261">
    <property type="component" value="Unassembled WGS sequence"/>
</dbReference>
<dbReference type="GO" id="GO:0005737">
    <property type="term" value="C:cytoplasm"/>
    <property type="evidence" value="ECO:0007669"/>
    <property type="project" value="UniProtKB-SubCell"/>
</dbReference>
<dbReference type="GO" id="GO:0004190">
    <property type="term" value="F:aspartic-type endopeptidase activity"/>
    <property type="evidence" value="ECO:0007669"/>
    <property type="project" value="UniProtKB-KW"/>
</dbReference>
<dbReference type="GO" id="GO:0015031">
    <property type="term" value="P:protein transport"/>
    <property type="evidence" value="ECO:0007669"/>
    <property type="project" value="UniProtKB-KW"/>
</dbReference>
<dbReference type="GO" id="GO:0006508">
    <property type="term" value="P:proteolysis"/>
    <property type="evidence" value="ECO:0007669"/>
    <property type="project" value="UniProtKB-KW"/>
</dbReference>
<dbReference type="CDD" id="cd05479">
    <property type="entry name" value="RP_DDI"/>
    <property type="match status" value="1"/>
</dbReference>
<dbReference type="CDD" id="cd01796">
    <property type="entry name" value="Ubl_Ddi1_like"/>
    <property type="match status" value="1"/>
</dbReference>
<dbReference type="Gene3D" id="2.40.70.10">
    <property type="entry name" value="Acid Proteases"/>
    <property type="match status" value="1"/>
</dbReference>
<dbReference type="Gene3D" id="1.10.8.10">
    <property type="entry name" value="DNA helicase RuvA subunit, C-terminal domain"/>
    <property type="match status" value="1"/>
</dbReference>
<dbReference type="Gene3D" id="3.10.20.90">
    <property type="entry name" value="Phosphatidylinositol 3-kinase Catalytic Subunit, Chain A, domain 1"/>
    <property type="match status" value="1"/>
</dbReference>
<dbReference type="InterPro" id="IPR033882">
    <property type="entry name" value="DDI1_N"/>
</dbReference>
<dbReference type="InterPro" id="IPR019103">
    <property type="entry name" value="Peptidase_aspartic_DDI1-type"/>
</dbReference>
<dbReference type="InterPro" id="IPR021109">
    <property type="entry name" value="Peptidase_aspartic_dom_sf"/>
</dbReference>
<dbReference type="InterPro" id="IPR015940">
    <property type="entry name" value="UBA"/>
</dbReference>
<dbReference type="InterPro" id="IPR009060">
    <property type="entry name" value="UBA-like_sf"/>
</dbReference>
<dbReference type="InterPro" id="IPR000626">
    <property type="entry name" value="Ubiquitin-like_dom"/>
</dbReference>
<dbReference type="InterPro" id="IPR029071">
    <property type="entry name" value="Ubiquitin-like_domsf"/>
</dbReference>
<dbReference type="PANTHER" id="PTHR15397:SF3">
    <property type="entry name" value="DNA DAMAGE INDUCIBLE 1 HOMOLOG 2"/>
    <property type="match status" value="1"/>
</dbReference>
<dbReference type="PANTHER" id="PTHR15397">
    <property type="entry name" value="SODIUM-GLUCOSE COTRANSPORTER REGULATORY PROTEIN -RELATED"/>
    <property type="match status" value="1"/>
</dbReference>
<dbReference type="Pfam" id="PF09668">
    <property type="entry name" value="Asp_protease"/>
    <property type="match status" value="1"/>
</dbReference>
<dbReference type="Pfam" id="PF24669">
    <property type="entry name" value="Ddi2_HDD"/>
    <property type="match status" value="1"/>
</dbReference>
<dbReference type="Pfam" id="PF00627">
    <property type="entry name" value="UBA"/>
    <property type="match status" value="1"/>
</dbReference>
<dbReference type="Pfam" id="PF00240">
    <property type="entry name" value="ubiquitin"/>
    <property type="match status" value="1"/>
</dbReference>
<dbReference type="SMART" id="SM00165">
    <property type="entry name" value="UBA"/>
    <property type="match status" value="1"/>
</dbReference>
<dbReference type="SMART" id="SM00213">
    <property type="entry name" value="UBQ"/>
    <property type="match status" value="1"/>
</dbReference>
<dbReference type="SUPFAM" id="SSF50630">
    <property type="entry name" value="Acid proteases"/>
    <property type="match status" value="1"/>
</dbReference>
<dbReference type="SUPFAM" id="SSF46934">
    <property type="entry name" value="UBA-like"/>
    <property type="match status" value="1"/>
</dbReference>
<dbReference type="SUPFAM" id="SSF54236">
    <property type="entry name" value="Ubiquitin-like"/>
    <property type="match status" value="1"/>
</dbReference>
<dbReference type="PROSITE" id="PS50030">
    <property type="entry name" value="UBA"/>
    <property type="match status" value="1"/>
</dbReference>
<dbReference type="PROSITE" id="PS50053">
    <property type="entry name" value="UBIQUITIN_2"/>
    <property type="match status" value="1"/>
</dbReference>
<protein>
    <recommendedName>
        <fullName>DNA damage-inducible protein 1</fullName>
        <ecNumber evidence="2">3.4.23.-</ecNumber>
    </recommendedName>
</protein>
<gene>
    <name type="primary">DDI1</name>
    <name type="ORF">CIMG_12111</name>
</gene>
<organism>
    <name type="scientific">Coccidioides immitis (strain RS)</name>
    <name type="common">Valley fever fungus</name>
    <dbReference type="NCBI Taxonomy" id="246410"/>
    <lineage>
        <taxon>Eukaryota</taxon>
        <taxon>Fungi</taxon>
        <taxon>Dikarya</taxon>
        <taxon>Ascomycota</taxon>
        <taxon>Pezizomycotina</taxon>
        <taxon>Eurotiomycetes</taxon>
        <taxon>Eurotiomycetidae</taxon>
        <taxon>Onygenales</taxon>
        <taxon>Onygenaceae</taxon>
        <taxon>Coccidioides</taxon>
    </lineage>
</organism>
<sequence>MRISVSVVASNVVVDNDLISLDVGGEMTLADLKAVIQSDINIAPAAQSLFHNNQLLTDDSKTLSQIGVVPGDMLGMHIRVPGRELAGSQGSANPSARTTQESLARRQQALPDPETLRLHMLGDPRVYETVRMQNPQLAAAARDSRLFREVLSAQQRAEADAEAAKEAKIAMLNADPFNLDAQREIEDIIRQNAVSENLHNAMEFSPEVFGRVTMLYIPAEVNSHKVKAFVDSGAQVTIMSPECAAACNIMHLVDRRYSGVAKGVGTASILGRVHLAHIKIDDLFLPCSFTVMEGKHIDLLLGLDMLKRYQACIDLKDNVLRIRDRNVPFLHEADLPKHQDEFANEPLIHGRGGALIGGRTGAVTHPAGNPGSLAQNAQTLPARANLAAPVGTPSSSTAPGRNPHSPSRWPAESISKITDIGFTREQAIQALDAANGDLEGAIGYLI</sequence>
<comment type="function">
    <text evidence="2 3">Probable aspartic protease. May be involved in the regulation of exocytosis. Acts as a linker between the 19S proteasome and polyubiquitinated proteins via UBA domain interactions with ubiquitin for their subsequent degradation. Required for S-phase checkpoint control.</text>
</comment>
<comment type="subunit">
    <text evidence="1">Binds ubiquitin and polyubiquitinated proteins.</text>
</comment>
<comment type="subcellular location">
    <subcellularLocation>
        <location evidence="1">Cytoplasm</location>
    </subcellularLocation>
</comment>
<comment type="similarity">
    <text evidence="7">Belongs to the DDI1 family.</text>
</comment>